<organism>
    <name type="scientific">Crimean-Congo hemorrhagic fever virus (isolate C68031)</name>
    <name type="common">CCHFV</name>
    <dbReference type="NCBI Taxonomy" id="11594"/>
    <lineage>
        <taxon>Viruses</taxon>
        <taxon>Riboviria</taxon>
        <taxon>Orthornavirae</taxon>
        <taxon>Negarnaviricota</taxon>
        <taxon>Polyploviricotina</taxon>
        <taxon>Ellioviricetes</taxon>
        <taxon>Bunyavirales</taxon>
        <taxon>Nairoviridae</taxon>
        <taxon>Orthonairovirus</taxon>
        <taxon>Orthonairovirus haemorrhagiae</taxon>
    </lineage>
</organism>
<name>NCAP_CCHFV</name>
<organismHost>
    <name type="scientific">Bos taurus</name>
    <name type="common">Bovine</name>
    <dbReference type="NCBI Taxonomy" id="9913"/>
</organismHost>
<organismHost>
    <name type="scientific">Capra hircus</name>
    <name type="common">Goat</name>
    <dbReference type="NCBI Taxonomy" id="9925"/>
</organismHost>
<organismHost>
    <name type="scientific">Homo sapiens</name>
    <name type="common">Human</name>
    <dbReference type="NCBI Taxonomy" id="9606"/>
</organismHost>
<organismHost>
    <name type="scientific">Hyalomma</name>
    <dbReference type="NCBI Taxonomy" id="34625"/>
</organismHost>
<organismHost>
    <name type="scientific">Ovis aries</name>
    <name type="common">Sheep</name>
    <dbReference type="NCBI Taxonomy" id="9940"/>
</organismHost>
<organismHost>
    <name type="scientific">Rhipicephalus microplus</name>
    <name type="common">Cattle tick</name>
    <name type="synonym">Boophilus microplus</name>
    <dbReference type="NCBI Taxonomy" id="6941"/>
</organismHost>
<gene>
    <name type="primary">N</name>
</gene>
<feature type="chain" id="PRO_0000222006" description="Nucleoprotein">
    <location>
        <begin position="1"/>
        <end position="482"/>
    </location>
</feature>
<feature type="short sequence motif" description="DEVD" evidence="2">
    <location>
        <begin position="266"/>
        <end position="269"/>
    </location>
</feature>
<feature type="site" description="Homooligomerization" evidence="1">
    <location>
        <position position="213"/>
    </location>
</feature>
<feature type="site" description="Homooligomerization" evidence="1">
    <location>
        <position position="267"/>
    </location>
</feature>
<feature type="site" description="Homooligomerization" evidence="1">
    <location>
        <position position="268"/>
    </location>
</feature>
<feature type="site" description="Cleavage by host CASP3/caspase 3" evidence="2">
    <location>
        <begin position="269"/>
        <end position="270"/>
    </location>
</feature>
<feature type="site" description="Homooligomerization" evidence="1">
    <location>
        <position position="276"/>
    </location>
</feature>
<feature type="site" description="Homooligomerization" evidence="1">
    <location>
        <position position="352"/>
    </location>
</feature>
<sequence>MENKIEVNNKDEMNKWFEEFKKGNGLVDTFTNPYSFCESVPNLERFVFQMASATDDAQKDSIYASALVEATKFCAPIYECAWVSSTGIVKKGLEWFEKNAGTIKSWDESYIELKVEVPKIEQLANYQQAALKWRKDIGFRVNANTAALSHKVLAEYKVPGEIVMSVKEMLSDMIRRRNLILNRGGDENPRGPVSREHVEWCREFVKGKYIMAFNPPWGDINKSGRSGIALVATGLAKLAETEGKGVFDEAKKTVEALNGYLDKHKDEVDKASADNMITNLLKHIAKAQELYKNSSALRAQGAQIDTAFSSYYWLYKAGVTPETFPTVSQFLFELGKQPRGTKKMKKALLSTPMKWGKKLYELFADDSFQQNRIYMHPAVLTAGRISEMGVCFGTIPVANPDDAAQGSGHTKSILNLRTNTETNNPCAKTIVKLFEIQKTGFNIQDMDIVASEHLLHQSLVGKQSPFQNAYNVKGNATSANII</sequence>
<accession>P27317</accession>
<keyword id="KW-0167">Capsid protein</keyword>
<keyword id="KW-1139">Helical capsid protein</keyword>
<keyword id="KW-0687">Ribonucleoprotein</keyword>
<keyword id="KW-0694">RNA-binding</keyword>
<keyword id="KW-0543">Viral nucleoprotein</keyword>
<keyword id="KW-0946">Virion</keyword>
<protein>
    <recommendedName>
        <fullName>Nucleoprotein</fullName>
    </recommendedName>
    <alternativeName>
        <fullName>Nucleocapsid protein</fullName>
        <shortName>Protein N</shortName>
    </alternativeName>
</protein>
<comment type="function">
    <text evidence="2">Binds dsRNA and ssRNA and probably participates in the packaging of viral genome (By similarity). In the dsRNA binding mode, the nucleocapsid protein specifically binds to the vRNA panhandle secondary structure formed at the termini of viral genome (By similarity). Does not discriminate between viral and nonviral RNAs through ssRNA binding mode (By similarity). Displays dsDNA endonuclease activity that is sequence non-specific (By similarity).</text>
</comment>
<comment type="cofactor">
    <cofactor>
        <name>Mn(2+)</name>
        <dbReference type="ChEBI" id="CHEBI:29035"/>
    </cofactor>
    <text evidence="2">Endonuclease activity is stimulated by divalent cations such as Mn2+, Co2+, and Mg2+.</text>
</comment>
<comment type="subunit">
    <text evidence="2">Probable homooligomer; forms a double superhelical polymer (By similarity). Monomer (By similarity).</text>
</comment>
<comment type="subcellular location">
    <subcellularLocation>
        <location evidence="1">Virion</location>
    </subcellularLocation>
    <text>Internal protein of virus particle.</text>
</comment>
<comment type="domain">
    <text evidence="1 2">The DQVD motif is a CASP3/caspase 3 cleavage site essential for viral replication in host cell (By similarity). However, the importance for viral replication is apprently not linked to caspase cleavage (By similarity). This motif is involved in homooligomerization (By similarity).</text>
</comment>
<comment type="PTM">
    <text evidence="1 2">Cleaved at the DQVD motif by host CASP3/caspase 3 in mammalian cells at 48 hours postinfection giving rise to cleavage products of about 30 kDa and 22 kDa that remain associated (By similarity). Only the monomeric form is cleaved (By similarity). Little or no cleavage in tick cells (By similarity). Caspase cleavage reduces the viral polymerase activity (By similarity). Caspase cleavage is not required for productive infection in mammalian or tick host cells (By similarity).</text>
</comment>
<comment type="similarity">
    <text evidence="3">Belongs to the nairovirus nucleocapsid protein family.</text>
</comment>
<evidence type="ECO:0000250" key="1">
    <source>
        <dbReference type="UniProtKB" id="P27318"/>
    </source>
</evidence>
<evidence type="ECO:0000250" key="2">
    <source>
        <dbReference type="UniProtKB" id="P89522"/>
    </source>
</evidence>
<evidence type="ECO:0000305" key="3"/>
<dbReference type="EMBL" id="M86625">
    <property type="protein sequence ID" value="AAA42888.1"/>
    <property type="molecule type" value="Genomic_RNA"/>
</dbReference>
<dbReference type="PIR" id="B42990">
    <property type="entry name" value="VHVUCH"/>
</dbReference>
<dbReference type="SMR" id="P27317"/>
<dbReference type="GO" id="GO:0019029">
    <property type="term" value="C:helical viral capsid"/>
    <property type="evidence" value="ECO:0007669"/>
    <property type="project" value="UniProtKB-KW"/>
</dbReference>
<dbReference type="GO" id="GO:1990904">
    <property type="term" value="C:ribonucleoprotein complex"/>
    <property type="evidence" value="ECO:0007669"/>
    <property type="project" value="UniProtKB-KW"/>
</dbReference>
<dbReference type="GO" id="GO:0019013">
    <property type="term" value="C:viral nucleocapsid"/>
    <property type="evidence" value="ECO:0007669"/>
    <property type="project" value="UniProtKB-KW"/>
</dbReference>
<dbReference type="GO" id="GO:0003723">
    <property type="term" value="F:RNA binding"/>
    <property type="evidence" value="ECO:0007669"/>
    <property type="project" value="UniProtKB-KW"/>
</dbReference>
<dbReference type="Gene3D" id="1.20.58.1110">
    <property type="match status" value="1"/>
</dbReference>
<dbReference type="InterPro" id="IPR003486">
    <property type="entry name" value="Nairo_nucleocap"/>
</dbReference>
<dbReference type="Pfam" id="PF02477">
    <property type="entry name" value="Nairo_nucleo"/>
    <property type="match status" value="1"/>
</dbReference>
<dbReference type="PIRSF" id="PIRSF003950">
    <property type="entry name" value="N_NairoV"/>
    <property type="match status" value="1"/>
</dbReference>
<proteinExistence type="inferred from homology"/>
<reference key="1">
    <citation type="journal article" date="1992" name="Virology">
        <title>Comparison of the S RNA segments and nucleoprotein sequences of Crimean-Congo hemorrhagic fever, Hazara, and Dugbe viruses.</title>
        <authorList>
            <person name="Marriott A.C."/>
            <person name="Nuttall P.A."/>
        </authorList>
    </citation>
    <scope>NUCLEOTIDE SEQUENCE [GENOMIC RNA]</scope>
</reference>